<evidence type="ECO:0000255" key="1">
    <source>
        <dbReference type="HAMAP-Rule" id="MF_00175"/>
    </source>
</evidence>
<evidence type="ECO:0000255" key="2">
    <source>
        <dbReference type="PROSITE-ProRule" id="PRU01250"/>
    </source>
</evidence>
<proteinExistence type="inferred from homology"/>
<comment type="function">
    <text evidence="1">ATP-dependent specificity component of the Clp protease. It directs the protease to specific substrates. Can perform chaperone functions in the absence of ClpP.</text>
</comment>
<comment type="subunit">
    <text evidence="1">Component of the ClpX-ClpP complex. Forms a hexameric ring that, in the presence of ATP, binds to fourteen ClpP subunits assembled into a disk-like structure with a central cavity, resembling the structure of eukaryotic proteasomes.</text>
</comment>
<comment type="similarity">
    <text evidence="1">Belongs to the ClpX chaperone family.</text>
</comment>
<dbReference type="EMBL" id="CP000509">
    <property type="protein sequence ID" value="ABL82975.1"/>
    <property type="molecule type" value="Genomic_DNA"/>
</dbReference>
<dbReference type="RefSeq" id="WP_011756908.1">
    <property type="nucleotide sequence ID" value="NC_008699.1"/>
</dbReference>
<dbReference type="SMR" id="A1SME0"/>
<dbReference type="STRING" id="196162.Noca_3475"/>
<dbReference type="KEGG" id="nca:Noca_3475"/>
<dbReference type="eggNOG" id="COG1219">
    <property type="taxonomic scope" value="Bacteria"/>
</dbReference>
<dbReference type="HOGENOM" id="CLU_014218_8_2_11"/>
<dbReference type="OrthoDB" id="9804062at2"/>
<dbReference type="Proteomes" id="UP000000640">
    <property type="component" value="Chromosome"/>
</dbReference>
<dbReference type="GO" id="GO:0009376">
    <property type="term" value="C:HslUV protease complex"/>
    <property type="evidence" value="ECO:0007669"/>
    <property type="project" value="TreeGrafter"/>
</dbReference>
<dbReference type="GO" id="GO:0005524">
    <property type="term" value="F:ATP binding"/>
    <property type="evidence" value="ECO:0007669"/>
    <property type="project" value="UniProtKB-UniRule"/>
</dbReference>
<dbReference type="GO" id="GO:0016887">
    <property type="term" value="F:ATP hydrolysis activity"/>
    <property type="evidence" value="ECO:0007669"/>
    <property type="project" value="InterPro"/>
</dbReference>
<dbReference type="GO" id="GO:0140662">
    <property type="term" value="F:ATP-dependent protein folding chaperone"/>
    <property type="evidence" value="ECO:0007669"/>
    <property type="project" value="InterPro"/>
</dbReference>
<dbReference type="GO" id="GO:0046983">
    <property type="term" value="F:protein dimerization activity"/>
    <property type="evidence" value="ECO:0007669"/>
    <property type="project" value="InterPro"/>
</dbReference>
<dbReference type="GO" id="GO:0051082">
    <property type="term" value="F:unfolded protein binding"/>
    <property type="evidence" value="ECO:0007669"/>
    <property type="project" value="UniProtKB-UniRule"/>
</dbReference>
<dbReference type="GO" id="GO:0008270">
    <property type="term" value="F:zinc ion binding"/>
    <property type="evidence" value="ECO:0007669"/>
    <property type="project" value="InterPro"/>
</dbReference>
<dbReference type="GO" id="GO:0051301">
    <property type="term" value="P:cell division"/>
    <property type="evidence" value="ECO:0007669"/>
    <property type="project" value="TreeGrafter"/>
</dbReference>
<dbReference type="GO" id="GO:0051603">
    <property type="term" value="P:proteolysis involved in protein catabolic process"/>
    <property type="evidence" value="ECO:0007669"/>
    <property type="project" value="TreeGrafter"/>
</dbReference>
<dbReference type="CDD" id="cd19497">
    <property type="entry name" value="RecA-like_ClpX"/>
    <property type="match status" value="1"/>
</dbReference>
<dbReference type="FunFam" id="1.10.8.60:FF:000002">
    <property type="entry name" value="ATP-dependent Clp protease ATP-binding subunit ClpX"/>
    <property type="match status" value="1"/>
</dbReference>
<dbReference type="FunFam" id="3.40.50.300:FF:000005">
    <property type="entry name" value="ATP-dependent Clp protease ATP-binding subunit ClpX"/>
    <property type="match status" value="1"/>
</dbReference>
<dbReference type="Gene3D" id="1.10.8.60">
    <property type="match status" value="1"/>
</dbReference>
<dbReference type="Gene3D" id="6.20.220.10">
    <property type="entry name" value="ClpX chaperone, C4-type zinc finger domain"/>
    <property type="match status" value="1"/>
</dbReference>
<dbReference type="Gene3D" id="3.40.50.300">
    <property type="entry name" value="P-loop containing nucleotide triphosphate hydrolases"/>
    <property type="match status" value="1"/>
</dbReference>
<dbReference type="HAMAP" id="MF_00175">
    <property type="entry name" value="ClpX"/>
    <property type="match status" value="1"/>
</dbReference>
<dbReference type="InterPro" id="IPR003593">
    <property type="entry name" value="AAA+_ATPase"/>
</dbReference>
<dbReference type="InterPro" id="IPR050052">
    <property type="entry name" value="ATP-dep_Clp_protease_ClpX"/>
</dbReference>
<dbReference type="InterPro" id="IPR003959">
    <property type="entry name" value="ATPase_AAA_core"/>
</dbReference>
<dbReference type="InterPro" id="IPR019489">
    <property type="entry name" value="Clp_ATPase_C"/>
</dbReference>
<dbReference type="InterPro" id="IPR004487">
    <property type="entry name" value="Clp_protease_ATP-bd_su_ClpX"/>
</dbReference>
<dbReference type="InterPro" id="IPR046425">
    <property type="entry name" value="ClpX_bact"/>
</dbReference>
<dbReference type="InterPro" id="IPR027417">
    <property type="entry name" value="P-loop_NTPase"/>
</dbReference>
<dbReference type="InterPro" id="IPR010603">
    <property type="entry name" value="Znf_CppX_C4"/>
</dbReference>
<dbReference type="InterPro" id="IPR038366">
    <property type="entry name" value="Znf_CppX_C4_sf"/>
</dbReference>
<dbReference type="NCBIfam" id="TIGR00382">
    <property type="entry name" value="clpX"/>
    <property type="match status" value="1"/>
</dbReference>
<dbReference type="NCBIfam" id="NF003745">
    <property type="entry name" value="PRK05342.1"/>
    <property type="match status" value="1"/>
</dbReference>
<dbReference type="PANTHER" id="PTHR48102:SF7">
    <property type="entry name" value="ATP-DEPENDENT CLP PROTEASE ATP-BINDING SUBUNIT CLPX-LIKE, MITOCHONDRIAL"/>
    <property type="match status" value="1"/>
</dbReference>
<dbReference type="PANTHER" id="PTHR48102">
    <property type="entry name" value="ATP-DEPENDENT CLP PROTEASE ATP-BINDING SUBUNIT CLPX-LIKE, MITOCHONDRIAL-RELATED"/>
    <property type="match status" value="1"/>
</dbReference>
<dbReference type="Pfam" id="PF07724">
    <property type="entry name" value="AAA_2"/>
    <property type="match status" value="1"/>
</dbReference>
<dbReference type="Pfam" id="PF10431">
    <property type="entry name" value="ClpB_D2-small"/>
    <property type="match status" value="1"/>
</dbReference>
<dbReference type="Pfam" id="PF06689">
    <property type="entry name" value="zf-C4_ClpX"/>
    <property type="match status" value="1"/>
</dbReference>
<dbReference type="SMART" id="SM00382">
    <property type="entry name" value="AAA"/>
    <property type="match status" value="1"/>
</dbReference>
<dbReference type="SMART" id="SM01086">
    <property type="entry name" value="ClpB_D2-small"/>
    <property type="match status" value="1"/>
</dbReference>
<dbReference type="SMART" id="SM00994">
    <property type="entry name" value="zf-C4_ClpX"/>
    <property type="match status" value="1"/>
</dbReference>
<dbReference type="SUPFAM" id="SSF57716">
    <property type="entry name" value="Glucocorticoid receptor-like (DNA-binding domain)"/>
    <property type="match status" value="1"/>
</dbReference>
<dbReference type="SUPFAM" id="SSF52540">
    <property type="entry name" value="P-loop containing nucleoside triphosphate hydrolases"/>
    <property type="match status" value="1"/>
</dbReference>
<dbReference type="PROSITE" id="PS51902">
    <property type="entry name" value="CLPX_ZB"/>
    <property type="match status" value="1"/>
</dbReference>
<organism>
    <name type="scientific">Nocardioides sp. (strain ATCC BAA-499 / JS614)</name>
    <dbReference type="NCBI Taxonomy" id="196162"/>
    <lineage>
        <taxon>Bacteria</taxon>
        <taxon>Bacillati</taxon>
        <taxon>Actinomycetota</taxon>
        <taxon>Actinomycetes</taxon>
        <taxon>Propionibacteriales</taxon>
        <taxon>Nocardioidaceae</taxon>
        <taxon>Nocardioides</taxon>
    </lineage>
</organism>
<protein>
    <recommendedName>
        <fullName evidence="1">ATP-dependent Clp protease ATP-binding subunit ClpX</fullName>
    </recommendedName>
</protein>
<feature type="chain" id="PRO_1000024601" description="ATP-dependent Clp protease ATP-binding subunit ClpX">
    <location>
        <begin position="1"/>
        <end position="426"/>
    </location>
</feature>
<feature type="domain" description="ClpX-type ZB" evidence="2">
    <location>
        <begin position="1"/>
        <end position="54"/>
    </location>
</feature>
<feature type="binding site" evidence="2">
    <location>
        <position position="13"/>
    </location>
    <ligand>
        <name>Zn(2+)</name>
        <dbReference type="ChEBI" id="CHEBI:29105"/>
    </ligand>
</feature>
<feature type="binding site" evidence="2">
    <location>
        <position position="16"/>
    </location>
    <ligand>
        <name>Zn(2+)</name>
        <dbReference type="ChEBI" id="CHEBI:29105"/>
    </ligand>
</feature>
<feature type="binding site" evidence="2">
    <location>
        <position position="35"/>
    </location>
    <ligand>
        <name>Zn(2+)</name>
        <dbReference type="ChEBI" id="CHEBI:29105"/>
    </ligand>
</feature>
<feature type="binding site" evidence="2">
    <location>
        <position position="38"/>
    </location>
    <ligand>
        <name>Zn(2+)</name>
        <dbReference type="ChEBI" id="CHEBI:29105"/>
    </ligand>
</feature>
<feature type="binding site" evidence="1">
    <location>
        <begin position="125"/>
        <end position="132"/>
    </location>
    <ligand>
        <name>ATP</name>
        <dbReference type="ChEBI" id="CHEBI:30616"/>
    </ligand>
</feature>
<sequence length="426" mass="46502">MARIGDGGDLLKCSFCGKSQKQVKKLIAGPGVYICDECIDLCNEIIEEELSEGAEVSLDELPKPKEIFEFLNSYVIGQEQAKKSLAVAVYNHYKRVQAGLQPMSGKHSKEEVVEVAKSNILVIGPTGCGKTYLAQTLARMLNVPFAIADATALTEAGYVGEDVENILLKLIQAADYDVKKAETGIIYIDEIDKVARKAENPSITRDVSGEGVQQALLKIIEGTTASVPPQGGRKHPHQEFIQIDTTNILFVVGGAFAGLEHIIEQRVGKKTLGFTAEVRGKAEREAEDLLAQVRPEDLTKFGLIPEFIGRLPLIASVSKLDQEALVQILTEPRNALVKQYQKLFELDGVELEFTPDAIEAIADNALERGTGARGLRAIIEEVLLHVMYDVPSRGDIAKVIVTREVVMDGVSPTLIPRESEKKKKSA</sequence>
<name>CLPX_NOCSJ</name>
<gene>
    <name evidence="1" type="primary">clpX</name>
    <name type="ordered locus">Noca_3475</name>
</gene>
<keyword id="KW-0067">ATP-binding</keyword>
<keyword id="KW-0143">Chaperone</keyword>
<keyword id="KW-0479">Metal-binding</keyword>
<keyword id="KW-0547">Nucleotide-binding</keyword>
<keyword id="KW-1185">Reference proteome</keyword>
<keyword id="KW-0862">Zinc</keyword>
<accession>A1SME0</accession>
<reference key="1">
    <citation type="submission" date="2006-12" db="EMBL/GenBank/DDBJ databases">
        <title>Complete sequence of chromosome 1 of Nocardioides sp. JS614.</title>
        <authorList>
            <person name="Copeland A."/>
            <person name="Lucas S."/>
            <person name="Lapidus A."/>
            <person name="Barry K."/>
            <person name="Detter J.C."/>
            <person name="Glavina del Rio T."/>
            <person name="Hammon N."/>
            <person name="Israni S."/>
            <person name="Dalin E."/>
            <person name="Tice H."/>
            <person name="Pitluck S."/>
            <person name="Thompson L.S."/>
            <person name="Brettin T."/>
            <person name="Bruce D."/>
            <person name="Han C."/>
            <person name="Tapia R."/>
            <person name="Schmutz J."/>
            <person name="Larimer F."/>
            <person name="Land M."/>
            <person name="Hauser L."/>
            <person name="Kyrpides N."/>
            <person name="Kim E."/>
            <person name="Mattes T."/>
            <person name="Gossett J."/>
            <person name="Richardson P."/>
        </authorList>
    </citation>
    <scope>NUCLEOTIDE SEQUENCE [LARGE SCALE GENOMIC DNA]</scope>
    <source>
        <strain>ATCC BAA-499 / JS614</strain>
    </source>
</reference>